<name>PHAG_PSEAE</name>
<proteinExistence type="predicted"/>
<keyword id="KW-1185">Reference proteome</keyword>
<keyword id="KW-0808">Transferase</keyword>
<dbReference type="EC" id="2.4.1.-"/>
<dbReference type="EMBL" id="AF209711">
    <property type="protein sequence ID" value="AAF61903.1"/>
    <property type="molecule type" value="Genomic_DNA"/>
</dbReference>
<dbReference type="EMBL" id="AE004091">
    <property type="protein sequence ID" value="AAG04119.1"/>
    <property type="molecule type" value="Genomic_DNA"/>
</dbReference>
<dbReference type="EMBL" id="L02105">
    <property type="protein sequence ID" value="AAA25978.1"/>
    <property type="status" value="ALT_FRAME"/>
    <property type="molecule type" value="Genomic_DNA"/>
</dbReference>
<dbReference type="PIR" id="B83554">
    <property type="entry name" value="B83554"/>
</dbReference>
<dbReference type="RefSeq" id="NP_249421.1">
    <property type="nucleotide sequence ID" value="NC_002516.2"/>
</dbReference>
<dbReference type="RefSeq" id="WP_003114157.1">
    <property type="nucleotide sequence ID" value="NZ_QZGE01000007.1"/>
</dbReference>
<dbReference type="SMR" id="Q51553"/>
<dbReference type="STRING" id="208964.PA0730"/>
<dbReference type="ESTHER" id="pseae-phag">
    <property type="family name" value="HAA-synthase-thioesterase-RhlA-PhaG"/>
</dbReference>
<dbReference type="PaxDb" id="208964-PA0730"/>
<dbReference type="DNASU" id="877678"/>
<dbReference type="GeneID" id="877678"/>
<dbReference type="KEGG" id="pae:PA0730"/>
<dbReference type="PATRIC" id="fig|208964.12.peg.757"/>
<dbReference type="PseudoCAP" id="PA0730"/>
<dbReference type="HOGENOM" id="CLU_062012_0_0_6"/>
<dbReference type="InParanoid" id="Q51553"/>
<dbReference type="OrthoDB" id="6984192at2"/>
<dbReference type="PhylomeDB" id="Q51553"/>
<dbReference type="BioCyc" id="PAER208964:G1FZ6-742-MONOMER"/>
<dbReference type="UniPathway" id="UPA00212"/>
<dbReference type="Proteomes" id="UP000002438">
    <property type="component" value="Chromosome"/>
</dbReference>
<dbReference type="GO" id="GO:0090499">
    <property type="term" value="F:pimelyl-[acyl-carrier protein] methyl ester esterase activity"/>
    <property type="evidence" value="ECO:0000318"/>
    <property type="project" value="GO_Central"/>
</dbReference>
<dbReference type="GO" id="GO:0016740">
    <property type="term" value="F:transferase activity"/>
    <property type="evidence" value="ECO:0007669"/>
    <property type="project" value="UniProtKB-KW"/>
</dbReference>
<dbReference type="GO" id="GO:0009102">
    <property type="term" value="P:biotin biosynthetic process"/>
    <property type="evidence" value="ECO:0000318"/>
    <property type="project" value="GO_Central"/>
</dbReference>
<dbReference type="Gene3D" id="3.40.50.1820">
    <property type="entry name" value="alpha/beta hydrolase"/>
    <property type="match status" value="1"/>
</dbReference>
<dbReference type="InterPro" id="IPR000073">
    <property type="entry name" value="AB_hydrolase_1"/>
</dbReference>
<dbReference type="InterPro" id="IPR029058">
    <property type="entry name" value="AB_hydrolase_fold"/>
</dbReference>
<dbReference type="InterPro" id="IPR050228">
    <property type="entry name" value="Carboxylesterase_BioH"/>
</dbReference>
<dbReference type="PANTHER" id="PTHR43194">
    <property type="entry name" value="HYDROLASE ALPHA/BETA FOLD FAMILY"/>
    <property type="match status" value="1"/>
</dbReference>
<dbReference type="PANTHER" id="PTHR43194:SF5">
    <property type="entry name" value="PIMELOYL-[ACYL-CARRIER PROTEIN] METHYL ESTER ESTERASE"/>
    <property type="match status" value="1"/>
</dbReference>
<dbReference type="Pfam" id="PF00561">
    <property type="entry name" value="Abhydrolase_1"/>
    <property type="match status" value="1"/>
</dbReference>
<dbReference type="SUPFAM" id="SSF53474">
    <property type="entry name" value="alpha/beta-Hydrolases"/>
    <property type="match status" value="1"/>
</dbReference>
<evidence type="ECO:0000255" key="1"/>
<evidence type="ECO:0000305" key="2"/>
<comment type="function">
    <text>Catalyzes the transfer of the acyl moiety from in vitro synthesized 3-hydroxydecanoyl-CoA to acyl carrier protein.</text>
</comment>
<comment type="pathway">
    <text>Polyester biosynthesis; polyhydroxyalkanoate biosynthesis.</text>
</comment>
<comment type="sequence caution" evidence="2">
    <conflict type="frameshift">
        <sequence resource="EMBL-CDS" id="AAA25978"/>
    </conflict>
</comment>
<feature type="chain" id="PRO_0000058370" description="(R)-3-hydroxydecanoyl-ACP:CoA transacylase">
    <location>
        <begin position="1"/>
        <end position="300"/>
    </location>
</feature>
<feature type="domain" description="AB hydrolase-1" evidence="1">
    <location>
        <begin position="29"/>
        <end position="253"/>
    </location>
</feature>
<feature type="sequence conflict" description="In Ref. 3." evidence="2" ref="3">
    <original>YA</original>
    <variation>MP</variation>
    <location>
        <begin position="63"/>
        <end position="64"/>
    </location>
</feature>
<feature type="sequence conflict" description="In Ref. 3." evidence="2" ref="3">
    <original>A</original>
    <variation>V</variation>
    <location>
        <position position="83"/>
    </location>
</feature>
<feature type="sequence conflict" description="In Ref. 3." evidence="2" ref="3">
    <original>M</original>
    <variation>L</variation>
    <location>
        <position position="99"/>
    </location>
</feature>
<feature type="sequence conflict" description="In Ref. 3; AAA25978." evidence="2" ref="3">
    <original>Y</original>
    <variation>D</variation>
    <location>
        <position position="165"/>
    </location>
</feature>
<feature type="sequence conflict" description="In Ref. 3; AAA25978." evidence="2" ref="3">
    <original>T</original>
    <variation>Q</variation>
    <location>
        <position position="277"/>
    </location>
</feature>
<feature type="sequence conflict" description="In Ref. 3." evidence="2" ref="3">
    <original>S</original>
    <variation>T</variation>
    <location>
        <position position="292"/>
    </location>
</feature>
<reference key="1">
    <citation type="journal article" date="2000" name="FEMS Microbiol. Lett.">
        <title>The Pseudomonas aeruginosa phaG gene product is involved in the synthesis of polyhydroxyalkanoic acid consisting of medium-chain-length constituents from non-related carbon sources.</title>
        <authorList>
            <person name="Hoffmann N."/>
            <person name="Steinbuchel A."/>
            <person name="Rehm B.H.A."/>
        </authorList>
    </citation>
    <scope>NUCLEOTIDE SEQUENCE [GENOMIC DNA]</scope>
    <source>
        <strain>ATCC 15692 / DSM 22644 / CIP 104116 / JCM 14847 / LMG 12228 / 1C / PRS 101 / PAO1</strain>
    </source>
</reference>
<reference key="2">
    <citation type="journal article" date="2000" name="Nature">
        <title>Complete genome sequence of Pseudomonas aeruginosa PAO1, an opportunistic pathogen.</title>
        <authorList>
            <person name="Stover C.K."/>
            <person name="Pham X.-Q.T."/>
            <person name="Erwin A.L."/>
            <person name="Mizoguchi S.D."/>
            <person name="Warrener P."/>
            <person name="Hickey M.J."/>
            <person name="Brinkman F.S.L."/>
            <person name="Hufnagle W.O."/>
            <person name="Kowalik D.J."/>
            <person name="Lagrou M."/>
            <person name="Garber R.L."/>
            <person name="Goltry L."/>
            <person name="Tolentino E."/>
            <person name="Westbrock-Wadman S."/>
            <person name="Yuan Y."/>
            <person name="Brody L.L."/>
            <person name="Coulter S.N."/>
            <person name="Folger K.R."/>
            <person name="Kas A."/>
            <person name="Larbig K."/>
            <person name="Lim R.M."/>
            <person name="Smith K.A."/>
            <person name="Spencer D.H."/>
            <person name="Wong G.K.-S."/>
            <person name="Wu Z."/>
            <person name="Paulsen I.T."/>
            <person name="Reizer J."/>
            <person name="Saier M.H. Jr."/>
            <person name="Hancock R.E.W."/>
            <person name="Lory S."/>
            <person name="Olson M.V."/>
        </authorList>
    </citation>
    <scope>NUCLEOTIDE SEQUENCE [LARGE SCALE GENOMIC DNA]</scope>
    <source>
        <strain>ATCC 15692 / DSM 22644 / CIP 104116 / JCM 14847 / LMG 12228 / 1C / PRS 101 / PAO1</strain>
    </source>
</reference>
<reference key="3">
    <citation type="submission" date="1992-09" db="EMBL/GenBank/DDBJ databases">
        <authorList>
            <person name="Tonetti D.A."/>
            <person name="Miller R.V."/>
        </authorList>
    </citation>
    <scope>NUCLEOTIDE SEQUENCE [GENOMIC DNA] OF 52-300</scope>
</reference>
<sequence length="300" mass="34247">MRPETAIIEIHGQYRIHTEFYGNPAAQQTIILVNGSLSTTASFAQTVKYLQPHYNVVLYDQPYAGQSKPHNENHTPISKECEARILLELIERFRAEVVMSFSWGGVATLLALAQRPGRIRRAVVNSFSPQLNPAMLDYLHRGLDYLAACDRTQIGNLVNETIGRYLPQLFKRYNFRHVSSLDEHEYHQMHFHIREVLRLNADSYTESFAGIEIPMLFMNGELDIYTTPHEARQFGQLIRGAEFHTIRNAGHFIDVEHKAAWQQTQDALLAFLRPQRTQPLNPIYRPQPNGASVPLAALAS</sequence>
<protein>
    <recommendedName>
        <fullName>(R)-3-hydroxydecanoyl-ACP:CoA transacylase</fullName>
        <ecNumber>2.4.1.-</ecNumber>
    </recommendedName>
    <alternativeName>
        <fullName>3-hydroxyacyl-CoA-acyl carrier protein transferase</fullName>
    </alternativeName>
    <alternativeName>
        <fullName>Quinolone sensitivity protein</fullName>
    </alternativeName>
</protein>
<organism>
    <name type="scientific">Pseudomonas aeruginosa (strain ATCC 15692 / DSM 22644 / CIP 104116 / JCM 14847 / LMG 12228 / 1C / PRS 101 / PAO1)</name>
    <dbReference type="NCBI Taxonomy" id="208964"/>
    <lineage>
        <taxon>Bacteria</taxon>
        <taxon>Pseudomonadati</taxon>
        <taxon>Pseudomonadota</taxon>
        <taxon>Gammaproteobacteria</taxon>
        <taxon>Pseudomonadales</taxon>
        <taxon>Pseudomonadaceae</taxon>
        <taxon>Pseudomonas</taxon>
    </lineage>
</organism>
<accession>Q51553</accession>
<accession>Q9L8E1</accession>
<gene>
    <name type="primary">phaG</name>
    <name type="synonym">qin</name>
    <name type="ordered locus">PA0730</name>
</gene>